<keyword id="KW-0240">DNA-directed RNA polymerase</keyword>
<keyword id="KW-0548">Nucleotidyltransferase</keyword>
<keyword id="KW-1185">Reference proteome</keyword>
<keyword id="KW-0804">Transcription</keyword>
<keyword id="KW-0808">Transferase</keyword>
<name>RPOA_RUEPO</name>
<sequence>MIHKNWAELIKPTQLEVKPGNDPARQATVIAEPLERGFGLTLGNALRRILMSSLQGAAISSVQIDNVLHEFSSVAGVREDVTDIILNLKQVSLRMDVEGPKRLSVNAKGPAVVTAGDISESAGIEVLNRDHVICHLDDGADLFMELTVNTGKGYVSADKNRPEDAPIGLIPIDAIYSPVKKVAYDVQPTREGQVLDYDKLTMKIETDGSITPDDAVAFAARILQDQLSIFVNFDEPESAGRQDDDDGLEFNPLLLKKVDELELSVRSANCLKNDNIVYIGDLIQKTEAEMLRTPNFGRKSLNEIKEVLSGMGLHLGMDVEDWPPDNIEDLAKKFEDAF</sequence>
<proteinExistence type="inferred from homology"/>
<feature type="chain" id="PRO_0000175378" description="DNA-directed RNA polymerase subunit alpha">
    <location>
        <begin position="1"/>
        <end position="338"/>
    </location>
</feature>
<feature type="region of interest" description="Alpha N-terminal domain (alpha-NTD)" evidence="1">
    <location>
        <begin position="1"/>
        <end position="234"/>
    </location>
</feature>
<feature type="region of interest" description="Alpha C-terminal domain (alpha-CTD)" evidence="1">
    <location>
        <begin position="250"/>
        <end position="338"/>
    </location>
</feature>
<gene>
    <name evidence="1" type="primary">rpoA</name>
    <name type="ordered locus">SPO0511</name>
</gene>
<reference key="1">
    <citation type="journal article" date="2004" name="Nature">
        <title>Genome sequence of Silicibacter pomeroyi reveals adaptations to the marine environment.</title>
        <authorList>
            <person name="Moran M.A."/>
            <person name="Buchan A."/>
            <person name="Gonzalez J.M."/>
            <person name="Heidelberg J.F."/>
            <person name="Whitman W.B."/>
            <person name="Kiene R.P."/>
            <person name="Henriksen J.R."/>
            <person name="King G.M."/>
            <person name="Belas R."/>
            <person name="Fuqua C."/>
            <person name="Brinkac L.M."/>
            <person name="Lewis M."/>
            <person name="Johri S."/>
            <person name="Weaver B."/>
            <person name="Pai G."/>
            <person name="Eisen J.A."/>
            <person name="Rahe E."/>
            <person name="Sheldon W.M."/>
            <person name="Ye W."/>
            <person name="Miller T.R."/>
            <person name="Carlton J."/>
            <person name="Rasko D.A."/>
            <person name="Paulsen I.T."/>
            <person name="Ren Q."/>
            <person name="Daugherty S.C."/>
            <person name="DeBoy R.T."/>
            <person name="Dodson R.J."/>
            <person name="Durkin A.S."/>
            <person name="Madupu R."/>
            <person name="Nelson W.C."/>
            <person name="Sullivan S.A."/>
            <person name="Rosovitz M.J."/>
            <person name="Haft D.H."/>
            <person name="Selengut J."/>
            <person name="Ward N."/>
        </authorList>
    </citation>
    <scope>NUCLEOTIDE SEQUENCE [LARGE SCALE GENOMIC DNA]</scope>
    <source>
        <strain>ATCC 700808 / DSM 15171 / DSS-3</strain>
    </source>
</reference>
<reference key="2">
    <citation type="journal article" date="2014" name="Stand. Genomic Sci.">
        <title>An updated genome annotation for the model marine bacterium Ruegeria pomeroyi DSS-3.</title>
        <authorList>
            <person name="Rivers A.R."/>
            <person name="Smith C.B."/>
            <person name="Moran M.A."/>
        </authorList>
    </citation>
    <scope>GENOME REANNOTATION</scope>
    <source>
        <strain>ATCC 700808 / DSM 15171 / DSS-3</strain>
    </source>
</reference>
<comment type="function">
    <text evidence="1">DNA-dependent RNA polymerase catalyzes the transcription of DNA into RNA using the four ribonucleoside triphosphates as substrates.</text>
</comment>
<comment type="catalytic activity">
    <reaction evidence="1">
        <text>RNA(n) + a ribonucleoside 5'-triphosphate = RNA(n+1) + diphosphate</text>
        <dbReference type="Rhea" id="RHEA:21248"/>
        <dbReference type="Rhea" id="RHEA-COMP:14527"/>
        <dbReference type="Rhea" id="RHEA-COMP:17342"/>
        <dbReference type="ChEBI" id="CHEBI:33019"/>
        <dbReference type="ChEBI" id="CHEBI:61557"/>
        <dbReference type="ChEBI" id="CHEBI:140395"/>
        <dbReference type="EC" id="2.7.7.6"/>
    </reaction>
</comment>
<comment type="subunit">
    <text evidence="1">Homodimer. The RNAP catalytic core consists of 2 alpha, 1 beta, 1 beta' and 1 omega subunit. When a sigma factor is associated with the core the holoenzyme is formed, which can initiate transcription.</text>
</comment>
<comment type="domain">
    <text evidence="1">The N-terminal domain is essential for RNAP assembly and basal transcription, whereas the C-terminal domain is involved in interaction with transcriptional regulators and with upstream promoter elements.</text>
</comment>
<comment type="similarity">
    <text evidence="1">Belongs to the RNA polymerase alpha chain family.</text>
</comment>
<accession>Q5LW32</accession>
<protein>
    <recommendedName>
        <fullName evidence="1">DNA-directed RNA polymerase subunit alpha</fullName>
        <shortName evidence="1">RNAP subunit alpha</shortName>
        <ecNumber evidence="1">2.7.7.6</ecNumber>
    </recommendedName>
    <alternativeName>
        <fullName evidence="1">RNA polymerase subunit alpha</fullName>
    </alternativeName>
    <alternativeName>
        <fullName evidence="1">Transcriptase subunit alpha</fullName>
    </alternativeName>
</protein>
<evidence type="ECO:0000255" key="1">
    <source>
        <dbReference type="HAMAP-Rule" id="MF_00059"/>
    </source>
</evidence>
<organism>
    <name type="scientific">Ruegeria pomeroyi (strain ATCC 700808 / DSM 15171 / DSS-3)</name>
    <name type="common">Silicibacter pomeroyi</name>
    <dbReference type="NCBI Taxonomy" id="246200"/>
    <lineage>
        <taxon>Bacteria</taxon>
        <taxon>Pseudomonadati</taxon>
        <taxon>Pseudomonadota</taxon>
        <taxon>Alphaproteobacteria</taxon>
        <taxon>Rhodobacterales</taxon>
        <taxon>Roseobacteraceae</taxon>
        <taxon>Ruegeria</taxon>
    </lineage>
</organism>
<dbReference type="EC" id="2.7.7.6" evidence="1"/>
<dbReference type="EMBL" id="CP000031">
    <property type="protein sequence ID" value="AAV93828.1"/>
    <property type="molecule type" value="Genomic_DNA"/>
</dbReference>
<dbReference type="RefSeq" id="WP_011046270.1">
    <property type="nucleotide sequence ID" value="NC_003911.12"/>
</dbReference>
<dbReference type="SMR" id="Q5LW32"/>
<dbReference type="STRING" id="246200.SPO0511"/>
<dbReference type="PaxDb" id="246200-SPO0511"/>
<dbReference type="KEGG" id="sil:SPO0511"/>
<dbReference type="eggNOG" id="COG0202">
    <property type="taxonomic scope" value="Bacteria"/>
</dbReference>
<dbReference type="HOGENOM" id="CLU_053084_0_0_5"/>
<dbReference type="OrthoDB" id="9805706at2"/>
<dbReference type="Proteomes" id="UP000001023">
    <property type="component" value="Chromosome"/>
</dbReference>
<dbReference type="GO" id="GO:0005737">
    <property type="term" value="C:cytoplasm"/>
    <property type="evidence" value="ECO:0007669"/>
    <property type="project" value="UniProtKB-ARBA"/>
</dbReference>
<dbReference type="GO" id="GO:0000428">
    <property type="term" value="C:DNA-directed RNA polymerase complex"/>
    <property type="evidence" value="ECO:0007669"/>
    <property type="project" value="UniProtKB-KW"/>
</dbReference>
<dbReference type="GO" id="GO:0003677">
    <property type="term" value="F:DNA binding"/>
    <property type="evidence" value="ECO:0007669"/>
    <property type="project" value="UniProtKB-UniRule"/>
</dbReference>
<dbReference type="GO" id="GO:0003899">
    <property type="term" value="F:DNA-directed RNA polymerase activity"/>
    <property type="evidence" value="ECO:0007669"/>
    <property type="project" value="UniProtKB-UniRule"/>
</dbReference>
<dbReference type="GO" id="GO:0046983">
    <property type="term" value="F:protein dimerization activity"/>
    <property type="evidence" value="ECO:0007669"/>
    <property type="project" value="InterPro"/>
</dbReference>
<dbReference type="GO" id="GO:0006351">
    <property type="term" value="P:DNA-templated transcription"/>
    <property type="evidence" value="ECO:0007669"/>
    <property type="project" value="UniProtKB-UniRule"/>
</dbReference>
<dbReference type="CDD" id="cd06928">
    <property type="entry name" value="RNAP_alpha_NTD"/>
    <property type="match status" value="1"/>
</dbReference>
<dbReference type="FunFam" id="1.10.150.20:FF:000001">
    <property type="entry name" value="DNA-directed RNA polymerase subunit alpha"/>
    <property type="match status" value="1"/>
</dbReference>
<dbReference type="FunFam" id="2.170.120.12:FF:000001">
    <property type="entry name" value="DNA-directed RNA polymerase subunit alpha"/>
    <property type="match status" value="1"/>
</dbReference>
<dbReference type="Gene3D" id="1.10.150.20">
    <property type="entry name" value="5' to 3' exonuclease, C-terminal subdomain"/>
    <property type="match status" value="1"/>
</dbReference>
<dbReference type="Gene3D" id="2.170.120.12">
    <property type="entry name" value="DNA-directed RNA polymerase, insert domain"/>
    <property type="match status" value="1"/>
</dbReference>
<dbReference type="Gene3D" id="3.30.1360.10">
    <property type="entry name" value="RNA polymerase, RBP11-like subunit"/>
    <property type="match status" value="1"/>
</dbReference>
<dbReference type="HAMAP" id="MF_00059">
    <property type="entry name" value="RNApol_bact_RpoA"/>
    <property type="match status" value="1"/>
</dbReference>
<dbReference type="InterPro" id="IPR011262">
    <property type="entry name" value="DNA-dir_RNA_pol_insert"/>
</dbReference>
<dbReference type="InterPro" id="IPR011263">
    <property type="entry name" value="DNA-dir_RNA_pol_RpoA/D/Rpb3"/>
</dbReference>
<dbReference type="InterPro" id="IPR011773">
    <property type="entry name" value="DNA-dir_RpoA"/>
</dbReference>
<dbReference type="InterPro" id="IPR036603">
    <property type="entry name" value="RBP11-like"/>
</dbReference>
<dbReference type="InterPro" id="IPR011260">
    <property type="entry name" value="RNAP_asu_C"/>
</dbReference>
<dbReference type="InterPro" id="IPR036643">
    <property type="entry name" value="RNApol_insert_sf"/>
</dbReference>
<dbReference type="NCBIfam" id="NF003513">
    <property type="entry name" value="PRK05182.1-2"/>
    <property type="match status" value="1"/>
</dbReference>
<dbReference type="NCBIfam" id="NF003519">
    <property type="entry name" value="PRK05182.2-5"/>
    <property type="match status" value="1"/>
</dbReference>
<dbReference type="NCBIfam" id="TIGR02027">
    <property type="entry name" value="rpoA"/>
    <property type="match status" value="1"/>
</dbReference>
<dbReference type="Pfam" id="PF01000">
    <property type="entry name" value="RNA_pol_A_bac"/>
    <property type="match status" value="1"/>
</dbReference>
<dbReference type="Pfam" id="PF03118">
    <property type="entry name" value="RNA_pol_A_CTD"/>
    <property type="match status" value="1"/>
</dbReference>
<dbReference type="Pfam" id="PF01193">
    <property type="entry name" value="RNA_pol_L"/>
    <property type="match status" value="1"/>
</dbReference>
<dbReference type="SMART" id="SM00662">
    <property type="entry name" value="RPOLD"/>
    <property type="match status" value="1"/>
</dbReference>
<dbReference type="SUPFAM" id="SSF47789">
    <property type="entry name" value="C-terminal domain of RNA polymerase alpha subunit"/>
    <property type="match status" value="1"/>
</dbReference>
<dbReference type="SUPFAM" id="SSF56553">
    <property type="entry name" value="Insert subdomain of RNA polymerase alpha subunit"/>
    <property type="match status" value="1"/>
</dbReference>
<dbReference type="SUPFAM" id="SSF55257">
    <property type="entry name" value="RBP11-like subunits of RNA polymerase"/>
    <property type="match status" value="1"/>
</dbReference>